<evidence type="ECO:0000250" key="1"/>
<evidence type="ECO:0000255" key="2">
    <source>
        <dbReference type="HAMAP-Rule" id="MF_01109"/>
    </source>
</evidence>
<organism>
    <name type="scientific">Burkholderia mallei (strain ATCC 23344)</name>
    <dbReference type="NCBI Taxonomy" id="243160"/>
    <lineage>
        <taxon>Bacteria</taxon>
        <taxon>Pseudomonadati</taxon>
        <taxon>Pseudomonadota</taxon>
        <taxon>Betaproteobacteria</taxon>
        <taxon>Burkholderiales</taxon>
        <taxon>Burkholderiaceae</taxon>
        <taxon>Burkholderia</taxon>
        <taxon>pseudomallei group</taxon>
    </lineage>
</organism>
<comment type="function">
    <text evidence="1">Reversibly catalyzes the transfer of the carbamoyl group from carbamoyl phosphate (CP) to the N(epsilon) atom of ornithine (ORN) to produce L-citrulline.</text>
</comment>
<comment type="catalytic activity">
    <reaction evidence="2">
        <text>carbamoyl phosphate + L-ornithine = L-citrulline + phosphate + H(+)</text>
        <dbReference type="Rhea" id="RHEA:19513"/>
        <dbReference type="ChEBI" id="CHEBI:15378"/>
        <dbReference type="ChEBI" id="CHEBI:43474"/>
        <dbReference type="ChEBI" id="CHEBI:46911"/>
        <dbReference type="ChEBI" id="CHEBI:57743"/>
        <dbReference type="ChEBI" id="CHEBI:58228"/>
        <dbReference type="EC" id="2.1.3.3"/>
    </reaction>
</comment>
<comment type="pathway">
    <text evidence="2">Amino-acid degradation; L-arginine degradation via ADI pathway; carbamoyl phosphate from L-arginine: step 2/2.</text>
</comment>
<comment type="subcellular location">
    <subcellularLocation>
        <location evidence="2">Cytoplasm</location>
    </subcellularLocation>
</comment>
<comment type="similarity">
    <text evidence="2">Belongs to the aspartate/ornithine carbamoyltransferase superfamily. OTCase family.</text>
</comment>
<protein>
    <recommendedName>
        <fullName evidence="2">Ornithine carbamoyltransferase, catabolic</fullName>
        <shortName evidence="2">OTCase</shortName>
        <ecNumber evidence="2">2.1.3.3</ecNumber>
    </recommendedName>
</protein>
<dbReference type="EC" id="2.1.3.3" evidence="2"/>
<dbReference type="EMBL" id="CP000010">
    <property type="protein sequence ID" value="AAU47429.1"/>
    <property type="molecule type" value="Genomic_DNA"/>
</dbReference>
<dbReference type="RefSeq" id="WP_004193943.1">
    <property type="nucleotide sequence ID" value="NC_006348.1"/>
</dbReference>
<dbReference type="RefSeq" id="YP_102831.1">
    <property type="nucleotide sequence ID" value="NC_006348.1"/>
</dbReference>
<dbReference type="SMR" id="Q62KD8"/>
<dbReference type="KEGG" id="bma:BMA1146"/>
<dbReference type="PATRIC" id="fig|243160.12.peg.1178"/>
<dbReference type="eggNOG" id="COG0078">
    <property type="taxonomic scope" value="Bacteria"/>
</dbReference>
<dbReference type="HOGENOM" id="CLU_043846_3_1_4"/>
<dbReference type="UniPathway" id="UPA00254">
    <property type="reaction ID" value="UER00365"/>
</dbReference>
<dbReference type="Proteomes" id="UP000006693">
    <property type="component" value="Chromosome 1"/>
</dbReference>
<dbReference type="GO" id="GO:0005737">
    <property type="term" value="C:cytoplasm"/>
    <property type="evidence" value="ECO:0007669"/>
    <property type="project" value="UniProtKB-SubCell"/>
</dbReference>
<dbReference type="GO" id="GO:0016597">
    <property type="term" value="F:amino acid binding"/>
    <property type="evidence" value="ECO:0007669"/>
    <property type="project" value="InterPro"/>
</dbReference>
<dbReference type="GO" id="GO:0004585">
    <property type="term" value="F:ornithine carbamoyltransferase activity"/>
    <property type="evidence" value="ECO:0007669"/>
    <property type="project" value="UniProtKB-UniRule"/>
</dbReference>
<dbReference type="GO" id="GO:0042450">
    <property type="term" value="P:arginine biosynthetic process via ornithine"/>
    <property type="evidence" value="ECO:0007669"/>
    <property type="project" value="TreeGrafter"/>
</dbReference>
<dbReference type="GO" id="GO:0019547">
    <property type="term" value="P:arginine catabolic process to ornithine"/>
    <property type="evidence" value="ECO:0007669"/>
    <property type="project" value="UniProtKB-UniPathway"/>
</dbReference>
<dbReference type="GO" id="GO:0019240">
    <property type="term" value="P:citrulline biosynthetic process"/>
    <property type="evidence" value="ECO:0007669"/>
    <property type="project" value="TreeGrafter"/>
</dbReference>
<dbReference type="GO" id="GO:0006526">
    <property type="term" value="P:L-arginine biosynthetic process"/>
    <property type="evidence" value="ECO:0007669"/>
    <property type="project" value="UniProtKB-UniRule"/>
</dbReference>
<dbReference type="FunFam" id="3.40.50.1370:FF:000004">
    <property type="entry name" value="Ornithine carbamoyltransferase"/>
    <property type="match status" value="1"/>
</dbReference>
<dbReference type="Gene3D" id="3.40.50.1370">
    <property type="entry name" value="Aspartate/ornithine carbamoyltransferase"/>
    <property type="match status" value="2"/>
</dbReference>
<dbReference type="HAMAP" id="MF_01109">
    <property type="entry name" value="OTCase"/>
    <property type="match status" value="1"/>
</dbReference>
<dbReference type="InterPro" id="IPR006132">
    <property type="entry name" value="Asp/Orn_carbamoyltranf_P-bd"/>
</dbReference>
<dbReference type="InterPro" id="IPR006130">
    <property type="entry name" value="Asp/Orn_carbamoylTrfase"/>
</dbReference>
<dbReference type="InterPro" id="IPR036901">
    <property type="entry name" value="Asp/Orn_carbamoylTrfase_sf"/>
</dbReference>
<dbReference type="InterPro" id="IPR006131">
    <property type="entry name" value="Asp_carbamoyltransf_Asp/Orn-bd"/>
</dbReference>
<dbReference type="InterPro" id="IPR002292">
    <property type="entry name" value="Orn/put_carbamltrans"/>
</dbReference>
<dbReference type="InterPro" id="IPR024904">
    <property type="entry name" value="OTCase_ArgI"/>
</dbReference>
<dbReference type="NCBIfam" id="TIGR00658">
    <property type="entry name" value="orni_carb_tr"/>
    <property type="match status" value="1"/>
</dbReference>
<dbReference type="NCBIfam" id="NF002470">
    <property type="entry name" value="PRK01713.1"/>
    <property type="match status" value="1"/>
</dbReference>
<dbReference type="PANTHER" id="PTHR45753:SF2">
    <property type="entry name" value="ORNITHINE CARBAMOYLTRANSFERASE"/>
    <property type="match status" value="1"/>
</dbReference>
<dbReference type="PANTHER" id="PTHR45753">
    <property type="entry name" value="ORNITHINE CARBAMOYLTRANSFERASE, MITOCHONDRIAL"/>
    <property type="match status" value="1"/>
</dbReference>
<dbReference type="Pfam" id="PF00185">
    <property type="entry name" value="OTCace"/>
    <property type="match status" value="1"/>
</dbReference>
<dbReference type="Pfam" id="PF02729">
    <property type="entry name" value="OTCace_N"/>
    <property type="match status" value="1"/>
</dbReference>
<dbReference type="PRINTS" id="PR00100">
    <property type="entry name" value="AOTCASE"/>
</dbReference>
<dbReference type="PRINTS" id="PR00102">
    <property type="entry name" value="OTCASE"/>
</dbReference>
<dbReference type="SUPFAM" id="SSF53671">
    <property type="entry name" value="Aspartate/ornithine carbamoyltransferase"/>
    <property type="match status" value="1"/>
</dbReference>
<dbReference type="PROSITE" id="PS00097">
    <property type="entry name" value="CARBAMOYLTRANSFERASE"/>
    <property type="match status" value="1"/>
</dbReference>
<keyword id="KW-0056">Arginine metabolism</keyword>
<keyword id="KW-0963">Cytoplasm</keyword>
<keyword id="KW-1185">Reference proteome</keyword>
<keyword id="KW-0808">Transferase</keyword>
<feature type="chain" id="PRO_0000112901" description="Ornithine carbamoyltransferase, catabolic">
    <location>
        <begin position="1"/>
        <end position="336"/>
    </location>
</feature>
<feature type="binding site" evidence="2">
    <location>
        <begin position="57"/>
        <end position="60"/>
    </location>
    <ligand>
        <name>carbamoyl phosphate</name>
        <dbReference type="ChEBI" id="CHEBI:58228"/>
    </ligand>
</feature>
<feature type="binding site" evidence="2">
    <location>
        <position position="84"/>
    </location>
    <ligand>
        <name>carbamoyl phosphate</name>
        <dbReference type="ChEBI" id="CHEBI:58228"/>
    </ligand>
</feature>
<feature type="binding site" evidence="2">
    <location>
        <position position="108"/>
    </location>
    <ligand>
        <name>carbamoyl phosphate</name>
        <dbReference type="ChEBI" id="CHEBI:58228"/>
    </ligand>
</feature>
<feature type="binding site" evidence="2">
    <location>
        <begin position="135"/>
        <end position="138"/>
    </location>
    <ligand>
        <name>carbamoyl phosphate</name>
        <dbReference type="ChEBI" id="CHEBI:58228"/>
    </ligand>
</feature>
<feature type="binding site" evidence="2">
    <location>
        <position position="168"/>
    </location>
    <ligand>
        <name>L-ornithine</name>
        <dbReference type="ChEBI" id="CHEBI:46911"/>
    </ligand>
</feature>
<feature type="binding site" evidence="2">
    <location>
        <position position="232"/>
    </location>
    <ligand>
        <name>L-ornithine</name>
        <dbReference type="ChEBI" id="CHEBI:46911"/>
    </ligand>
</feature>
<feature type="binding site" evidence="2">
    <location>
        <begin position="236"/>
        <end position="237"/>
    </location>
    <ligand>
        <name>L-ornithine</name>
        <dbReference type="ChEBI" id="CHEBI:46911"/>
    </ligand>
</feature>
<feature type="binding site" evidence="2">
    <location>
        <begin position="274"/>
        <end position="275"/>
    </location>
    <ligand>
        <name>carbamoyl phosphate</name>
        <dbReference type="ChEBI" id="CHEBI:58228"/>
    </ligand>
</feature>
<feature type="binding site" evidence="2">
    <location>
        <position position="321"/>
    </location>
    <ligand>
        <name>carbamoyl phosphate</name>
        <dbReference type="ChEBI" id="CHEBI:58228"/>
    </ligand>
</feature>
<reference key="1">
    <citation type="journal article" date="2004" name="Proc. Natl. Acad. Sci. U.S.A.">
        <title>Structural flexibility in the Burkholderia mallei genome.</title>
        <authorList>
            <person name="Nierman W.C."/>
            <person name="DeShazer D."/>
            <person name="Kim H.S."/>
            <person name="Tettelin H."/>
            <person name="Nelson K.E."/>
            <person name="Feldblyum T.V."/>
            <person name="Ulrich R.L."/>
            <person name="Ronning C.M."/>
            <person name="Brinkac L.M."/>
            <person name="Daugherty S.C."/>
            <person name="Davidsen T.D."/>
            <person name="DeBoy R.T."/>
            <person name="Dimitrov G."/>
            <person name="Dodson R.J."/>
            <person name="Durkin A.S."/>
            <person name="Gwinn M.L."/>
            <person name="Haft D.H."/>
            <person name="Khouri H.M."/>
            <person name="Kolonay J.F."/>
            <person name="Madupu R."/>
            <person name="Mohammoud Y."/>
            <person name="Nelson W.C."/>
            <person name="Radune D."/>
            <person name="Romero C.M."/>
            <person name="Sarria S."/>
            <person name="Selengut J."/>
            <person name="Shamblin C."/>
            <person name="Sullivan S.A."/>
            <person name="White O."/>
            <person name="Yu Y."/>
            <person name="Zafar N."/>
            <person name="Zhou L."/>
            <person name="Fraser C.M."/>
        </authorList>
    </citation>
    <scope>NUCLEOTIDE SEQUENCE [LARGE SCALE GENOMIC DNA]</scope>
    <source>
        <strain>ATCC 23344</strain>
    </source>
</reference>
<gene>
    <name evidence="2" type="primary">arcB</name>
    <name type="ordered locus">BMA1146</name>
</gene>
<sequence length="336" mass="38017">MSFNLHNRNLLSLIHHNARELRYLLDLARDLKRAKYSGTEQPRLLRKNIALIFEKTSTRTRCAFEVAAYDQGANVTYIDPASSQIGHKESMRDTARVLGRMYDAIEYRGFSQEIVEELAHHAGVPVFNGLTDEYHPTQMLADVMTMREHSDKPLHDIRYAYLGDARNNMGNSLLLIGAKLGMDVRIGAPKSLWPAADFIAQCEAFAAESGARLTLTEDPYEAVKGVDFIHTDVWVSMGEPVEAWDERINALLPYQVNRKLIESTGNPRTRFMHCLPSFHNCETKVGKQIAERYPHLQDGIEVTDEVFESPRCIAFEQAENRMHTIKAVLVSTLGGI</sequence>
<accession>Q62KD8</accession>
<name>OTCC_BURMA</name>
<proteinExistence type="inferred from homology"/>